<keyword id="KW-0472">Membrane</keyword>
<keyword id="KW-0496">Mitochondrion</keyword>
<keyword id="KW-1000">Mitochondrion outer membrane</keyword>
<keyword id="KW-1267">Proteomics identification</keyword>
<keyword id="KW-1185">Reference proteome</keyword>
<keyword id="KW-0677">Repeat</keyword>
<keyword id="KW-0735">Signal-anchor</keyword>
<keyword id="KW-0812">Transmembrane</keyword>
<keyword id="KW-1133">Transmembrane helix</keyword>
<protein>
    <recommendedName>
        <fullName>Armadillo repeat-containing X-linked protein 2</fullName>
    </recommendedName>
    <alternativeName>
        <fullName>ARM protein lost in epithelial cancers on chromosome X 2</fullName>
        <shortName>Protein ALEX2</shortName>
    </alternativeName>
</protein>
<evidence type="ECO:0000250" key="1">
    <source>
        <dbReference type="UniProtKB" id="Q6A058"/>
    </source>
</evidence>
<evidence type="ECO:0000250" key="2">
    <source>
        <dbReference type="UniProtKB" id="Q8BHS6"/>
    </source>
</evidence>
<evidence type="ECO:0000255" key="3"/>
<evidence type="ECO:0000256" key="4">
    <source>
        <dbReference type="SAM" id="MobiDB-lite"/>
    </source>
</evidence>
<evidence type="ECO:0000269" key="5">
    <source>
    </source>
</evidence>
<evidence type="ECO:0000305" key="6"/>
<organism>
    <name type="scientific">Homo sapiens</name>
    <name type="common">Human</name>
    <dbReference type="NCBI Taxonomy" id="9606"/>
    <lineage>
        <taxon>Eukaryota</taxon>
        <taxon>Metazoa</taxon>
        <taxon>Chordata</taxon>
        <taxon>Craniata</taxon>
        <taxon>Vertebrata</taxon>
        <taxon>Euteleostomi</taxon>
        <taxon>Mammalia</taxon>
        <taxon>Eutheria</taxon>
        <taxon>Euarchontoglires</taxon>
        <taxon>Primates</taxon>
        <taxon>Haplorrhini</taxon>
        <taxon>Catarrhini</taxon>
        <taxon>Hominidae</taxon>
        <taxon>Homo</taxon>
    </lineage>
</organism>
<reference key="1">
    <citation type="journal article" date="1998" name="DNA Res.">
        <title>Prediction of the coding sequences of unidentified human genes. IX. The complete sequences of 100 new cDNA clones from brain which can code for large proteins in vitro.</title>
        <authorList>
            <person name="Nagase T."/>
            <person name="Ishikawa K."/>
            <person name="Miyajima N."/>
            <person name="Tanaka A."/>
            <person name="Kotani H."/>
            <person name="Nomura N."/>
            <person name="Ohara O."/>
        </authorList>
    </citation>
    <scope>NUCLEOTIDE SEQUENCE [LARGE SCALE MRNA]</scope>
    <source>
        <tissue>Brain</tissue>
    </source>
</reference>
<reference key="2">
    <citation type="journal article" date="2005" name="Nature">
        <title>The DNA sequence of the human X chromosome.</title>
        <authorList>
            <person name="Ross M.T."/>
            <person name="Grafham D.V."/>
            <person name="Coffey A.J."/>
            <person name="Scherer S."/>
            <person name="McLay K."/>
            <person name="Muzny D."/>
            <person name="Platzer M."/>
            <person name="Howell G.R."/>
            <person name="Burrows C."/>
            <person name="Bird C.P."/>
            <person name="Frankish A."/>
            <person name="Lovell F.L."/>
            <person name="Howe K.L."/>
            <person name="Ashurst J.L."/>
            <person name="Fulton R.S."/>
            <person name="Sudbrak R."/>
            <person name="Wen G."/>
            <person name="Jones M.C."/>
            <person name="Hurles M.E."/>
            <person name="Andrews T.D."/>
            <person name="Scott C.E."/>
            <person name="Searle S."/>
            <person name="Ramser J."/>
            <person name="Whittaker A."/>
            <person name="Deadman R."/>
            <person name="Carter N.P."/>
            <person name="Hunt S.E."/>
            <person name="Chen R."/>
            <person name="Cree A."/>
            <person name="Gunaratne P."/>
            <person name="Havlak P."/>
            <person name="Hodgson A."/>
            <person name="Metzker M.L."/>
            <person name="Richards S."/>
            <person name="Scott G."/>
            <person name="Steffen D."/>
            <person name="Sodergren E."/>
            <person name="Wheeler D.A."/>
            <person name="Worley K.C."/>
            <person name="Ainscough R."/>
            <person name="Ambrose K.D."/>
            <person name="Ansari-Lari M.A."/>
            <person name="Aradhya S."/>
            <person name="Ashwell R.I."/>
            <person name="Babbage A.K."/>
            <person name="Bagguley C.L."/>
            <person name="Ballabio A."/>
            <person name="Banerjee R."/>
            <person name="Barker G.E."/>
            <person name="Barlow K.F."/>
            <person name="Barrett I.P."/>
            <person name="Bates K.N."/>
            <person name="Beare D.M."/>
            <person name="Beasley H."/>
            <person name="Beasley O."/>
            <person name="Beck A."/>
            <person name="Bethel G."/>
            <person name="Blechschmidt K."/>
            <person name="Brady N."/>
            <person name="Bray-Allen S."/>
            <person name="Bridgeman A.M."/>
            <person name="Brown A.J."/>
            <person name="Brown M.J."/>
            <person name="Bonnin D."/>
            <person name="Bruford E.A."/>
            <person name="Buhay C."/>
            <person name="Burch P."/>
            <person name="Burford D."/>
            <person name="Burgess J."/>
            <person name="Burrill W."/>
            <person name="Burton J."/>
            <person name="Bye J.M."/>
            <person name="Carder C."/>
            <person name="Carrel L."/>
            <person name="Chako J."/>
            <person name="Chapman J.C."/>
            <person name="Chavez D."/>
            <person name="Chen E."/>
            <person name="Chen G."/>
            <person name="Chen Y."/>
            <person name="Chen Z."/>
            <person name="Chinault C."/>
            <person name="Ciccodicola A."/>
            <person name="Clark S.Y."/>
            <person name="Clarke G."/>
            <person name="Clee C.M."/>
            <person name="Clegg S."/>
            <person name="Clerc-Blankenburg K."/>
            <person name="Clifford K."/>
            <person name="Cobley V."/>
            <person name="Cole C.G."/>
            <person name="Conquer J.S."/>
            <person name="Corby N."/>
            <person name="Connor R.E."/>
            <person name="David R."/>
            <person name="Davies J."/>
            <person name="Davis C."/>
            <person name="Davis J."/>
            <person name="Delgado O."/>
            <person name="Deshazo D."/>
            <person name="Dhami P."/>
            <person name="Ding Y."/>
            <person name="Dinh H."/>
            <person name="Dodsworth S."/>
            <person name="Draper H."/>
            <person name="Dugan-Rocha S."/>
            <person name="Dunham A."/>
            <person name="Dunn M."/>
            <person name="Durbin K.J."/>
            <person name="Dutta I."/>
            <person name="Eades T."/>
            <person name="Ellwood M."/>
            <person name="Emery-Cohen A."/>
            <person name="Errington H."/>
            <person name="Evans K.L."/>
            <person name="Faulkner L."/>
            <person name="Francis F."/>
            <person name="Frankland J."/>
            <person name="Fraser A.E."/>
            <person name="Galgoczy P."/>
            <person name="Gilbert J."/>
            <person name="Gill R."/>
            <person name="Gloeckner G."/>
            <person name="Gregory S.G."/>
            <person name="Gribble S."/>
            <person name="Griffiths C."/>
            <person name="Grocock R."/>
            <person name="Gu Y."/>
            <person name="Gwilliam R."/>
            <person name="Hamilton C."/>
            <person name="Hart E.A."/>
            <person name="Hawes A."/>
            <person name="Heath P.D."/>
            <person name="Heitmann K."/>
            <person name="Hennig S."/>
            <person name="Hernandez J."/>
            <person name="Hinzmann B."/>
            <person name="Ho S."/>
            <person name="Hoffs M."/>
            <person name="Howden P.J."/>
            <person name="Huckle E.J."/>
            <person name="Hume J."/>
            <person name="Hunt P.J."/>
            <person name="Hunt A.R."/>
            <person name="Isherwood J."/>
            <person name="Jacob L."/>
            <person name="Johnson D."/>
            <person name="Jones S."/>
            <person name="de Jong P.J."/>
            <person name="Joseph S.S."/>
            <person name="Keenan S."/>
            <person name="Kelly S."/>
            <person name="Kershaw J.K."/>
            <person name="Khan Z."/>
            <person name="Kioschis P."/>
            <person name="Klages S."/>
            <person name="Knights A.J."/>
            <person name="Kosiura A."/>
            <person name="Kovar-Smith C."/>
            <person name="Laird G.K."/>
            <person name="Langford C."/>
            <person name="Lawlor S."/>
            <person name="Leversha M."/>
            <person name="Lewis L."/>
            <person name="Liu W."/>
            <person name="Lloyd C."/>
            <person name="Lloyd D.M."/>
            <person name="Loulseged H."/>
            <person name="Loveland J.E."/>
            <person name="Lovell J.D."/>
            <person name="Lozado R."/>
            <person name="Lu J."/>
            <person name="Lyne R."/>
            <person name="Ma J."/>
            <person name="Maheshwari M."/>
            <person name="Matthews L.H."/>
            <person name="McDowall J."/>
            <person name="McLaren S."/>
            <person name="McMurray A."/>
            <person name="Meidl P."/>
            <person name="Meitinger T."/>
            <person name="Milne S."/>
            <person name="Miner G."/>
            <person name="Mistry S.L."/>
            <person name="Morgan M."/>
            <person name="Morris S."/>
            <person name="Mueller I."/>
            <person name="Mullikin J.C."/>
            <person name="Nguyen N."/>
            <person name="Nordsiek G."/>
            <person name="Nyakatura G."/>
            <person name="O'dell C.N."/>
            <person name="Okwuonu G."/>
            <person name="Palmer S."/>
            <person name="Pandian R."/>
            <person name="Parker D."/>
            <person name="Parrish J."/>
            <person name="Pasternak S."/>
            <person name="Patel D."/>
            <person name="Pearce A.V."/>
            <person name="Pearson D.M."/>
            <person name="Pelan S.E."/>
            <person name="Perez L."/>
            <person name="Porter K.M."/>
            <person name="Ramsey Y."/>
            <person name="Reichwald K."/>
            <person name="Rhodes S."/>
            <person name="Ridler K.A."/>
            <person name="Schlessinger D."/>
            <person name="Schueler M.G."/>
            <person name="Sehra H.K."/>
            <person name="Shaw-Smith C."/>
            <person name="Shen H."/>
            <person name="Sheridan E.M."/>
            <person name="Shownkeen R."/>
            <person name="Skuce C.D."/>
            <person name="Smith M.L."/>
            <person name="Sotheran E.C."/>
            <person name="Steingruber H.E."/>
            <person name="Steward C.A."/>
            <person name="Storey R."/>
            <person name="Swann R.M."/>
            <person name="Swarbreck D."/>
            <person name="Tabor P.E."/>
            <person name="Taudien S."/>
            <person name="Taylor T."/>
            <person name="Teague B."/>
            <person name="Thomas K."/>
            <person name="Thorpe A."/>
            <person name="Timms K."/>
            <person name="Tracey A."/>
            <person name="Trevanion S."/>
            <person name="Tromans A.C."/>
            <person name="d'Urso M."/>
            <person name="Verduzco D."/>
            <person name="Villasana D."/>
            <person name="Waldron L."/>
            <person name="Wall M."/>
            <person name="Wang Q."/>
            <person name="Warren J."/>
            <person name="Warry G.L."/>
            <person name="Wei X."/>
            <person name="West A."/>
            <person name="Whitehead S.L."/>
            <person name="Whiteley M.N."/>
            <person name="Wilkinson J.E."/>
            <person name="Willey D.L."/>
            <person name="Williams G."/>
            <person name="Williams L."/>
            <person name="Williamson A."/>
            <person name="Williamson H."/>
            <person name="Wilming L."/>
            <person name="Woodmansey R.L."/>
            <person name="Wray P.W."/>
            <person name="Yen J."/>
            <person name="Zhang J."/>
            <person name="Zhou J."/>
            <person name="Zoghbi H."/>
            <person name="Zorilla S."/>
            <person name="Buck D."/>
            <person name="Reinhardt R."/>
            <person name="Poustka A."/>
            <person name="Rosenthal A."/>
            <person name="Lehrach H."/>
            <person name="Meindl A."/>
            <person name="Minx P.J."/>
            <person name="Hillier L.W."/>
            <person name="Willard H.F."/>
            <person name="Wilson R.K."/>
            <person name="Waterston R.H."/>
            <person name="Rice C.M."/>
            <person name="Vaudin M."/>
            <person name="Coulson A."/>
            <person name="Nelson D.L."/>
            <person name="Weinstock G."/>
            <person name="Sulston J.E."/>
            <person name="Durbin R.M."/>
            <person name="Hubbard T."/>
            <person name="Gibbs R.A."/>
            <person name="Beck S."/>
            <person name="Rogers J."/>
            <person name="Bentley D.R."/>
        </authorList>
    </citation>
    <scope>NUCLEOTIDE SEQUENCE [LARGE SCALE GENOMIC DNA]</scope>
</reference>
<reference key="3">
    <citation type="journal article" date="2004" name="Genome Res.">
        <title>The status, quality, and expansion of the NIH full-length cDNA project: the Mammalian Gene Collection (MGC).</title>
        <authorList>
            <consortium name="The MGC Project Team"/>
        </authorList>
    </citation>
    <scope>NUCLEOTIDE SEQUENCE [LARGE SCALE MRNA]</scope>
    <source>
        <tissue>Placenta</tissue>
        <tissue>Skin</tissue>
    </source>
</reference>
<reference key="4">
    <citation type="journal article" date="2001" name="Biochem. Biophys. Res. Commun.">
        <title>ALEX1, a novel human armadillo repeat protein that is expressed differentially in normal tissues and carcinomas.</title>
        <authorList>
            <person name="Kurochkin I.V."/>
            <person name="Yonemitsu N."/>
            <person name="Funahashi S."/>
            <person name="Nomura H."/>
        </authorList>
    </citation>
    <scope>TISSUE SPECIFICITY</scope>
</reference>
<name>ARMX2_HUMAN</name>
<dbReference type="EMBL" id="AB011084">
    <property type="protein sequence ID" value="BAA25438.2"/>
    <property type="status" value="ALT_INIT"/>
    <property type="molecule type" value="mRNA"/>
</dbReference>
<dbReference type="EMBL" id="Z83131">
    <property type="protein sequence ID" value="CAI42019.1"/>
    <property type="molecule type" value="Genomic_DNA"/>
</dbReference>
<dbReference type="EMBL" id="Z83131">
    <property type="protein sequence ID" value="CAI42022.1"/>
    <property type="molecule type" value="Genomic_DNA"/>
</dbReference>
<dbReference type="EMBL" id="BC012541">
    <property type="protein sequence ID" value="AAH12541.1"/>
    <property type="molecule type" value="mRNA"/>
</dbReference>
<dbReference type="EMBL" id="BC015926">
    <property type="protein sequence ID" value="AAH15926.1"/>
    <property type="molecule type" value="mRNA"/>
</dbReference>
<dbReference type="CCDS" id="CCDS14490.1"/>
<dbReference type="PIR" id="T00084">
    <property type="entry name" value="T00084"/>
</dbReference>
<dbReference type="RefSeq" id="NP_001269160.1">
    <property type="nucleotide sequence ID" value="NM_001282231.2"/>
</dbReference>
<dbReference type="RefSeq" id="NP_055597.1">
    <property type="nucleotide sequence ID" value="NM_014782.7"/>
</dbReference>
<dbReference type="RefSeq" id="NP_808818.1">
    <property type="nucleotide sequence ID" value="NM_177949.4"/>
</dbReference>
<dbReference type="RefSeq" id="XP_005278166.1">
    <property type="nucleotide sequence ID" value="XM_005278109.2"/>
</dbReference>
<dbReference type="RefSeq" id="XP_005278167.1">
    <property type="nucleotide sequence ID" value="XM_005278110.2"/>
</dbReference>
<dbReference type="RefSeq" id="XP_005278168.1">
    <property type="nucleotide sequence ID" value="XM_005278111.2"/>
</dbReference>
<dbReference type="RefSeq" id="XP_005278170.1">
    <property type="nucleotide sequence ID" value="XM_005278113.2"/>
</dbReference>
<dbReference type="RefSeq" id="XP_005278171.1">
    <property type="nucleotide sequence ID" value="XM_005278114.2"/>
</dbReference>
<dbReference type="RefSeq" id="XP_005278172.1">
    <property type="nucleotide sequence ID" value="XM_005278115.2"/>
</dbReference>
<dbReference type="RefSeq" id="XP_005278173.1">
    <property type="nucleotide sequence ID" value="XM_005278116.2"/>
</dbReference>
<dbReference type="RefSeq" id="XP_005278174.1">
    <property type="nucleotide sequence ID" value="XM_005278117.2"/>
</dbReference>
<dbReference type="RefSeq" id="XP_011529373.1">
    <property type="nucleotide sequence ID" value="XM_011531071.2"/>
</dbReference>
<dbReference type="RefSeq" id="XP_011529374.1">
    <property type="nucleotide sequence ID" value="XM_011531072.2"/>
</dbReference>
<dbReference type="RefSeq" id="XP_016885476.1">
    <property type="nucleotide sequence ID" value="XM_017029987.3"/>
</dbReference>
<dbReference type="RefSeq" id="XP_016885477.1">
    <property type="nucleotide sequence ID" value="XM_017029988.3"/>
</dbReference>
<dbReference type="RefSeq" id="XP_016885478.1">
    <property type="nucleotide sequence ID" value="XM_017029989.1"/>
</dbReference>
<dbReference type="RefSeq" id="XP_016885479.1">
    <property type="nucleotide sequence ID" value="XM_017029990.2"/>
</dbReference>
<dbReference type="RefSeq" id="XP_016885480.1">
    <property type="nucleotide sequence ID" value="XM_017029991.2"/>
</dbReference>
<dbReference type="RefSeq" id="XP_016885481.1">
    <property type="nucleotide sequence ID" value="XM_017029992.2"/>
</dbReference>
<dbReference type="RefSeq" id="XP_016885482.1">
    <property type="nucleotide sequence ID" value="XM_017029993.1"/>
</dbReference>
<dbReference type="RefSeq" id="XP_016885483.1">
    <property type="nucleotide sequence ID" value="XM_017029994.1"/>
</dbReference>
<dbReference type="RefSeq" id="XP_016885484.1">
    <property type="nucleotide sequence ID" value="XM_017029995.2"/>
</dbReference>
<dbReference type="RefSeq" id="XP_016885485.1">
    <property type="nucleotide sequence ID" value="XM_017029996.1"/>
</dbReference>
<dbReference type="RefSeq" id="XP_016885486.1">
    <property type="nucleotide sequence ID" value="XM_017029997.2"/>
</dbReference>
<dbReference type="RefSeq" id="XP_024308252.1">
    <property type="nucleotide sequence ID" value="XM_024452484.2"/>
</dbReference>
<dbReference type="RefSeq" id="XP_047298637.1">
    <property type="nucleotide sequence ID" value="XM_047442681.1"/>
</dbReference>
<dbReference type="RefSeq" id="XP_047298638.1">
    <property type="nucleotide sequence ID" value="XM_047442682.1"/>
</dbReference>
<dbReference type="RefSeq" id="XP_047298639.1">
    <property type="nucleotide sequence ID" value="XM_047442683.1"/>
</dbReference>
<dbReference type="RefSeq" id="XP_047298640.1">
    <property type="nucleotide sequence ID" value="XM_047442684.1"/>
</dbReference>
<dbReference type="RefSeq" id="XP_047298641.1">
    <property type="nucleotide sequence ID" value="XM_047442685.1"/>
</dbReference>
<dbReference type="RefSeq" id="XP_047298642.1">
    <property type="nucleotide sequence ID" value="XM_047442686.1"/>
</dbReference>
<dbReference type="RefSeq" id="XP_047298643.1">
    <property type="nucleotide sequence ID" value="XM_047442687.1"/>
</dbReference>
<dbReference type="RefSeq" id="XP_047298644.1">
    <property type="nucleotide sequence ID" value="XM_047442688.1"/>
</dbReference>
<dbReference type="RefSeq" id="XP_047298645.1">
    <property type="nucleotide sequence ID" value="XM_047442689.1"/>
</dbReference>
<dbReference type="RefSeq" id="XP_047298646.1">
    <property type="nucleotide sequence ID" value="XM_047442690.1"/>
</dbReference>
<dbReference type="RefSeq" id="XP_047298647.1">
    <property type="nucleotide sequence ID" value="XM_047442691.1"/>
</dbReference>
<dbReference type="RefSeq" id="XP_047298648.1">
    <property type="nucleotide sequence ID" value="XM_047442692.1"/>
</dbReference>
<dbReference type="RefSeq" id="XP_047298649.1">
    <property type="nucleotide sequence ID" value="XM_047442693.1"/>
</dbReference>
<dbReference type="RefSeq" id="XP_054184166.1">
    <property type="nucleotide sequence ID" value="XM_054328191.1"/>
</dbReference>
<dbReference type="RefSeq" id="XP_054184167.1">
    <property type="nucleotide sequence ID" value="XM_054328192.1"/>
</dbReference>
<dbReference type="RefSeq" id="XP_054184168.1">
    <property type="nucleotide sequence ID" value="XM_054328193.1"/>
</dbReference>
<dbReference type="RefSeq" id="XP_054184169.1">
    <property type="nucleotide sequence ID" value="XM_054328194.1"/>
</dbReference>
<dbReference type="RefSeq" id="XP_054184170.1">
    <property type="nucleotide sequence ID" value="XM_054328195.1"/>
</dbReference>
<dbReference type="RefSeq" id="XP_054184171.1">
    <property type="nucleotide sequence ID" value="XM_054328196.1"/>
</dbReference>
<dbReference type="RefSeq" id="XP_054184172.1">
    <property type="nucleotide sequence ID" value="XM_054328197.1"/>
</dbReference>
<dbReference type="RefSeq" id="XP_054184173.1">
    <property type="nucleotide sequence ID" value="XM_054328198.1"/>
</dbReference>
<dbReference type="RefSeq" id="XP_054184174.1">
    <property type="nucleotide sequence ID" value="XM_054328199.1"/>
</dbReference>
<dbReference type="RefSeq" id="XP_054184175.1">
    <property type="nucleotide sequence ID" value="XM_054328200.1"/>
</dbReference>
<dbReference type="RefSeq" id="XP_054184176.1">
    <property type="nucleotide sequence ID" value="XM_054328201.1"/>
</dbReference>
<dbReference type="RefSeq" id="XP_054184177.1">
    <property type="nucleotide sequence ID" value="XM_054328202.1"/>
</dbReference>
<dbReference type="RefSeq" id="XP_054184178.1">
    <property type="nucleotide sequence ID" value="XM_054328203.1"/>
</dbReference>
<dbReference type="RefSeq" id="XP_054184179.1">
    <property type="nucleotide sequence ID" value="XM_054328204.1"/>
</dbReference>
<dbReference type="RefSeq" id="XP_054184180.1">
    <property type="nucleotide sequence ID" value="XM_054328205.1"/>
</dbReference>
<dbReference type="RefSeq" id="XP_054184181.1">
    <property type="nucleotide sequence ID" value="XM_054328206.1"/>
</dbReference>
<dbReference type="RefSeq" id="XP_054184182.1">
    <property type="nucleotide sequence ID" value="XM_054328207.1"/>
</dbReference>
<dbReference type="RefSeq" id="XP_054184183.1">
    <property type="nucleotide sequence ID" value="XM_054328208.1"/>
</dbReference>
<dbReference type="RefSeq" id="XP_054184184.1">
    <property type="nucleotide sequence ID" value="XM_054328209.1"/>
</dbReference>
<dbReference type="RefSeq" id="XP_054184185.1">
    <property type="nucleotide sequence ID" value="XM_054328210.1"/>
</dbReference>
<dbReference type="RefSeq" id="XP_054184186.1">
    <property type="nucleotide sequence ID" value="XM_054328211.1"/>
</dbReference>
<dbReference type="RefSeq" id="XP_054184187.1">
    <property type="nucleotide sequence ID" value="XM_054328212.1"/>
</dbReference>
<dbReference type="RefSeq" id="XP_054184188.1">
    <property type="nucleotide sequence ID" value="XM_054328213.1"/>
</dbReference>
<dbReference type="RefSeq" id="XP_054184189.1">
    <property type="nucleotide sequence ID" value="XM_054328214.1"/>
</dbReference>
<dbReference type="RefSeq" id="XP_054184190.1">
    <property type="nucleotide sequence ID" value="XM_054328215.1"/>
</dbReference>
<dbReference type="RefSeq" id="XP_054184191.1">
    <property type="nucleotide sequence ID" value="XM_054328216.1"/>
</dbReference>
<dbReference type="RefSeq" id="XP_054184192.1">
    <property type="nucleotide sequence ID" value="XM_054328217.1"/>
</dbReference>
<dbReference type="RefSeq" id="XP_054184193.1">
    <property type="nucleotide sequence ID" value="XM_054328218.1"/>
</dbReference>
<dbReference type="RefSeq" id="XP_054184194.1">
    <property type="nucleotide sequence ID" value="XM_054328219.1"/>
</dbReference>
<dbReference type="RefSeq" id="XP_054184195.1">
    <property type="nucleotide sequence ID" value="XM_054328220.1"/>
</dbReference>
<dbReference type="RefSeq" id="XP_054184196.1">
    <property type="nucleotide sequence ID" value="XM_054328221.1"/>
</dbReference>
<dbReference type="SMR" id="Q7L311"/>
<dbReference type="BioGRID" id="115161">
    <property type="interactions" value="29"/>
</dbReference>
<dbReference type="FunCoup" id="Q7L311">
    <property type="interactions" value="373"/>
</dbReference>
<dbReference type="IntAct" id="Q7L311">
    <property type="interactions" value="6"/>
</dbReference>
<dbReference type="MINT" id="Q7L311"/>
<dbReference type="STRING" id="9606.ENSP00000349281"/>
<dbReference type="GlyGen" id="Q7L311">
    <property type="glycosylation" value="1 site"/>
</dbReference>
<dbReference type="iPTMnet" id="Q7L311"/>
<dbReference type="PhosphoSitePlus" id="Q7L311"/>
<dbReference type="BioMuta" id="ARMCX2"/>
<dbReference type="DMDM" id="74759000"/>
<dbReference type="jPOST" id="Q7L311"/>
<dbReference type="MassIVE" id="Q7L311"/>
<dbReference type="PaxDb" id="9606-ENSP00000331662"/>
<dbReference type="PeptideAtlas" id="Q7L311"/>
<dbReference type="ProteomicsDB" id="68769"/>
<dbReference type="Pumba" id="Q7L311"/>
<dbReference type="Antibodypedia" id="28782">
    <property type="antibodies" value="153 antibodies from 26 providers"/>
</dbReference>
<dbReference type="DNASU" id="9823"/>
<dbReference type="Ensembl" id="ENST00000328766.9">
    <property type="protein sequence ID" value="ENSP00000331662.5"/>
    <property type="gene ID" value="ENSG00000184867.14"/>
</dbReference>
<dbReference type="Ensembl" id="ENST00000330154.6">
    <property type="protein sequence ID" value="ENSP00000328631.2"/>
    <property type="gene ID" value="ENSG00000184867.14"/>
</dbReference>
<dbReference type="Ensembl" id="ENST00000356824.9">
    <property type="protein sequence ID" value="ENSP00000349281.4"/>
    <property type="gene ID" value="ENSG00000184867.14"/>
</dbReference>
<dbReference type="GeneID" id="9823"/>
<dbReference type="KEGG" id="hsa:9823"/>
<dbReference type="MANE-Select" id="ENST00000356824.9">
    <property type="protein sequence ID" value="ENSP00000349281.4"/>
    <property type="RefSeq nucleotide sequence ID" value="NM_177949.4"/>
    <property type="RefSeq protein sequence ID" value="NP_808818.1"/>
</dbReference>
<dbReference type="UCSC" id="uc004eid.3">
    <property type="organism name" value="human"/>
</dbReference>
<dbReference type="AGR" id="HGNC:16869"/>
<dbReference type="CTD" id="9823"/>
<dbReference type="DisGeNET" id="9823"/>
<dbReference type="GeneCards" id="ARMCX2"/>
<dbReference type="HGNC" id="HGNC:16869">
    <property type="gene designation" value="ARMCX2"/>
</dbReference>
<dbReference type="HPA" id="ENSG00000184867">
    <property type="expression patterns" value="Tissue enhanced (epididymis)"/>
</dbReference>
<dbReference type="MIM" id="300363">
    <property type="type" value="gene"/>
</dbReference>
<dbReference type="neXtProt" id="NX_Q7L311"/>
<dbReference type="OpenTargets" id="ENSG00000184867"/>
<dbReference type="PharmGKB" id="PA134985862"/>
<dbReference type="VEuPathDB" id="HostDB:ENSG00000184867"/>
<dbReference type="eggNOG" id="ENOG502QQ2D">
    <property type="taxonomic scope" value="Eukaryota"/>
</dbReference>
<dbReference type="GeneTree" id="ENSGT00940000163008"/>
<dbReference type="HOGENOM" id="CLU_028273_0_0_1"/>
<dbReference type="InParanoid" id="Q7L311"/>
<dbReference type="OMA" id="YNYREFN"/>
<dbReference type="OrthoDB" id="10017790at2759"/>
<dbReference type="PAN-GO" id="Q7L311">
    <property type="GO annotations" value="1 GO annotation based on evolutionary models"/>
</dbReference>
<dbReference type="PhylomeDB" id="Q7L311"/>
<dbReference type="TreeFam" id="TF335652"/>
<dbReference type="PathwayCommons" id="Q7L311"/>
<dbReference type="SignaLink" id="Q7L311"/>
<dbReference type="BioGRID-ORCS" id="9823">
    <property type="hits" value="9 hits in 767 CRISPR screens"/>
</dbReference>
<dbReference type="ChiTaRS" id="ARMCX2">
    <property type="organism name" value="human"/>
</dbReference>
<dbReference type="GenomeRNAi" id="9823"/>
<dbReference type="Pharos" id="Q7L311">
    <property type="development level" value="Tbio"/>
</dbReference>
<dbReference type="PRO" id="PR:Q7L311"/>
<dbReference type="Proteomes" id="UP000005640">
    <property type="component" value="Chromosome X"/>
</dbReference>
<dbReference type="RNAct" id="Q7L311">
    <property type="molecule type" value="protein"/>
</dbReference>
<dbReference type="Bgee" id="ENSG00000184867">
    <property type="expression patterns" value="Expressed in corpus epididymis and 189 other cell types or tissues"/>
</dbReference>
<dbReference type="ExpressionAtlas" id="Q7L311">
    <property type="expression patterns" value="baseline and differential"/>
</dbReference>
<dbReference type="GO" id="GO:0005741">
    <property type="term" value="C:mitochondrial outer membrane"/>
    <property type="evidence" value="ECO:0007669"/>
    <property type="project" value="UniProtKB-SubCell"/>
</dbReference>
<dbReference type="GO" id="GO:0005739">
    <property type="term" value="C:mitochondrion"/>
    <property type="evidence" value="ECO:0006056"/>
    <property type="project" value="FlyBase"/>
</dbReference>
<dbReference type="Gene3D" id="1.25.10.10">
    <property type="entry name" value="Leucine-rich Repeat Variant"/>
    <property type="match status" value="1"/>
</dbReference>
<dbReference type="InterPro" id="IPR011989">
    <property type="entry name" value="ARM-like"/>
</dbReference>
<dbReference type="InterPro" id="IPR006911">
    <property type="entry name" value="ARM-rpt_dom"/>
</dbReference>
<dbReference type="InterPro" id="IPR016024">
    <property type="entry name" value="ARM-type_fold"/>
</dbReference>
<dbReference type="InterPro" id="IPR000225">
    <property type="entry name" value="Armadillo"/>
</dbReference>
<dbReference type="InterPro" id="IPR051303">
    <property type="entry name" value="Armcx_regulator"/>
</dbReference>
<dbReference type="PANTHER" id="PTHR15712">
    <property type="entry name" value="ARMADILLO REPEAT CONTAINING PROTEIN"/>
    <property type="match status" value="1"/>
</dbReference>
<dbReference type="PANTHER" id="PTHR15712:SF9">
    <property type="entry name" value="ARMADILLO REPEAT-CONTAINING X-LINKED PROTEIN 2"/>
    <property type="match status" value="1"/>
</dbReference>
<dbReference type="Pfam" id="PF04826">
    <property type="entry name" value="Arm_2"/>
    <property type="match status" value="1"/>
</dbReference>
<dbReference type="SMART" id="SM00185">
    <property type="entry name" value="ARM"/>
    <property type="match status" value="1"/>
</dbReference>
<dbReference type="SUPFAM" id="SSF48371">
    <property type="entry name" value="ARM repeat"/>
    <property type="match status" value="1"/>
</dbReference>
<accession>Q7L311</accession>
<accession>O60267</accession>
<accession>Q5H9D9</accession>
<comment type="function">
    <text evidence="1">May regulate the dynamics and distribution of mitochondria in neural cells.</text>
</comment>
<comment type="subcellular location">
    <subcellularLocation>
        <location evidence="1">Mitochondrion</location>
    </subcellularLocation>
    <subcellularLocation>
        <location evidence="2">Mitochondrion outer membrane</location>
        <topology evidence="3">Single-pass membrane protein</topology>
    </subcellularLocation>
</comment>
<comment type="tissue specificity">
    <text evidence="5">Expressed at high levels ovary, heart, testis, prostate, brain, spleen and colon. Expressed at very low levels in liver and thymus. Not expressed in peripheral blood leukocytes. Not expressed in pancreas and ovarian carcinomas.</text>
</comment>
<comment type="similarity">
    <text evidence="6">Belongs to the eutherian X-chromosome-specific Armcx family.</text>
</comment>
<comment type="sequence caution" evidence="6">
    <conflict type="erroneous initiation">
        <sequence resource="EMBL-CDS" id="BAA25438"/>
    </conflict>
</comment>
<comment type="online information" name="Atlas of Genetics and Cytogenetics in Oncology and Haematology">
    <link uri="https://atlasgeneticsoncology.org/gene/478/ALEX2Xq22"/>
</comment>
<sequence>MSRVRDAGCVAAGIVIGAGAWYCVYKYTRGRDQTKKRMAKPKNRAVAGTGARARAGLRAGFTIDLGSGFSPPTPVRAEAEDRAQDEASALDTVGAEAVAPAASSAEAQSGAGSQAQEADGAGVGPKAESVVGAAMASAIAPPPGVTEALGAAEAPAMAGAPKVAEAPREAETSRAAVPPGTVVPTEAAAPTEVTEGPGVAAPTKVAEAPGVASPTEAAEAPVPATPTGAAAPTGAAESPGTSGSPRTAVVPGTSAAKKATPGAHTGAIPKATSATGAVPKGGGKGVTRSRNGGKGKGKKSKVEVDELGMGFRPGDGAAAAAAASANGGQAFLAEVPDSEEGESGWTDTESDSDSEPETQRRGRGRRPVAMQKRPFPYEIDEILGVRDLRKVLALLQKSDDPFIQQVALLTLSNNANYSCNQETIRKLGGLPIIANMINKTDPHIKEKALMAMNNLSENYENQGRLQVYMNKVMDDIMASNLNSAVQVVGLKFLTNMTITNDYQHLLVNSIANFFRLLSQGGGKIKVEILKILSNFAENPDMLKKLLSTQVPASFSSLYNSYVESEILINALTLFEIIYDNLRAEVFNYREFNKGSLFYLCTTSGVCVKKIRALANHHDLLVKVKVIKLVNKF</sequence>
<gene>
    <name type="primary">ARMCX2</name>
    <name type="synonym">ALEX2</name>
    <name type="synonym">KIAA0512</name>
</gene>
<feature type="chain" id="PRO_0000191364" description="Armadillo repeat-containing X-linked protein 2">
    <location>
        <begin position="1"/>
        <end position="632"/>
    </location>
</feature>
<feature type="topological domain" description="Mitochondrial intermembrane" evidence="2">
    <location>
        <begin position="1"/>
        <end position="6"/>
    </location>
</feature>
<feature type="transmembrane region" description="Helical; Signal-anchor" evidence="3">
    <location>
        <begin position="7"/>
        <end position="25"/>
    </location>
</feature>
<feature type="topological domain" description="Cytoplasmic" evidence="2">
    <location>
        <begin position="26"/>
        <end position="632"/>
    </location>
</feature>
<feature type="repeat" description="ARM 1" evidence="3">
    <location>
        <begin position="376"/>
        <end position="416"/>
    </location>
</feature>
<feature type="repeat" description="ARM 2" evidence="3">
    <location>
        <begin position="418"/>
        <end position="457"/>
    </location>
</feature>
<feature type="repeat" description="ARM 3" evidence="3">
    <location>
        <begin position="498"/>
        <end position="537"/>
    </location>
</feature>
<feature type="region of interest" description="Mitochondrion outer membrane (MOM)-targeting sequence" evidence="6">
    <location>
        <begin position="1"/>
        <end position="6"/>
    </location>
</feature>
<feature type="region of interest" description="Mitochondrion outer membrane (MOM)-targeting sequence" evidence="6">
    <location>
        <begin position="26"/>
        <end position="40"/>
    </location>
</feature>
<feature type="region of interest" description="Disordered" evidence="4">
    <location>
        <begin position="68"/>
        <end position="124"/>
    </location>
</feature>
<feature type="region of interest" description="Disordered" evidence="4">
    <location>
        <begin position="160"/>
        <end position="304"/>
    </location>
</feature>
<feature type="region of interest" description="Disordered" evidence="4">
    <location>
        <begin position="335"/>
        <end position="369"/>
    </location>
</feature>
<feature type="compositionally biased region" description="Low complexity" evidence="4">
    <location>
        <begin position="86"/>
        <end position="120"/>
    </location>
</feature>
<feature type="compositionally biased region" description="Low complexity" evidence="4">
    <location>
        <begin position="211"/>
        <end position="241"/>
    </location>
</feature>
<feature type="compositionally biased region" description="Acidic residues" evidence="4">
    <location>
        <begin position="336"/>
        <end position="356"/>
    </location>
</feature>
<proteinExistence type="evidence at protein level"/>